<dbReference type="EMBL" id="AF006488">
    <property type="protein sequence ID" value="AAC41241.1"/>
    <property type="molecule type" value="mRNA"/>
</dbReference>
<dbReference type="EMBL" id="BC076414">
    <property type="protein sequence ID" value="AAH76414.1"/>
    <property type="molecule type" value="mRNA"/>
</dbReference>
<dbReference type="RefSeq" id="NP_571033.1">
    <property type="nucleotide sequence ID" value="NM_130958.1"/>
</dbReference>
<dbReference type="SMR" id="O57409"/>
<dbReference type="FunCoup" id="O57409">
    <property type="interactions" value="162"/>
</dbReference>
<dbReference type="STRING" id="7955.ENSDARP00000021660"/>
<dbReference type="GlyCosmos" id="O57409">
    <property type="glycosylation" value="1 site, No reported glycans"/>
</dbReference>
<dbReference type="PaxDb" id="7955-ENSDARP00000021660"/>
<dbReference type="Ensembl" id="ENSDART00000019259">
    <property type="protein sequence ID" value="ENSDARP00000021660"/>
    <property type="gene ID" value="ENSDARG00000004232"/>
</dbReference>
<dbReference type="GeneID" id="30141"/>
<dbReference type="KEGG" id="dre:30141"/>
<dbReference type="AGR" id="ZFIN:ZDB-GENE-980526-114"/>
<dbReference type="CTD" id="30141"/>
<dbReference type="ZFIN" id="ZDB-GENE-980526-114">
    <property type="gene designation" value="dlb"/>
</dbReference>
<dbReference type="eggNOG" id="KOG1217">
    <property type="taxonomic scope" value="Eukaryota"/>
</dbReference>
<dbReference type="InParanoid" id="O57409"/>
<dbReference type="OMA" id="VLCRCQA"/>
<dbReference type="OrthoDB" id="283575at2759"/>
<dbReference type="PhylomeDB" id="O57409"/>
<dbReference type="TreeFam" id="TF351835"/>
<dbReference type="PRO" id="PR:O57409"/>
<dbReference type="Proteomes" id="UP000000437">
    <property type="component" value="Chromosome 5"/>
</dbReference>
<dbReference type="Bgee" id="ENSDARG00000004232">
    <property type="expression patterns" value="Expressed in neuron and 48 other cell types or tissues"/>
</dbReference>
<dbReference type="ExpressionAtlas" id="O57409">
    <property type="expression patterns" value="baseline and differential"/>
</dbReference>
<dbReference type="GO" id="GO:0005886">
    <property type="term" value="C:plasma membrane"/>
    <property type="evidence" value="ECO:0000318"/>
    <property type="project" value="GO_Central"/>
</dbReference>
<dbReference type="GO" id="GO:0005509">
    <property type="term" value="F:calcium ion binding"/>
    <property type="evidence" value="ECO:0007669"/>
    <property type="project" value="InterPro"/>
</dbReference>
<dbReference type="GO" id="GO:0005112">
    <property type="term" value="F:Notch binding"/>
    <property type="evidence" value="ECO:0000318"/>
    <property type="project" value="GO_Central"/>
</dbReference>
<dbReference type="GO" id="GO:0030154">
    <property type="term" value="P:cell differentiation"/>
    <property type="evidence" value="ECO:0007669"/>
    <property type="project" value="UniProtKB-KW"/>
</dbReference>
<dbReference type="GO" id="GO:0021536">
    <property type="term" value="P:diencephalon development"/>
    <property type="evidence" value="ECO:0000315"/>
    <property type="project" value="ZFIN"/>
</dbReference>
<dbReference type="GO" id="GO:0030901">
    <property type="term" value="P:midbrain development"/>
    <property type="evidence" value="ECO:0000316"/>
    <property type="project" value="ZFIN"/>
</dbReference>
<dbReference type="GO" id="GO:0045746">
    <property type="term" value="P:negative regulation of Notch signaling pathway"/>
    <property type="evidence" value="ECO:0000318"/>
    <property type="project" value="GO_Central"/>
</dbReference>
<dbReference type="GO" id="GO:0007219">
    <property type="term" value="P:Notch signaling pathway"/>
    <property type="evidence" value="ECO:0000318"/>
    <property type="project" value="GO_Central"/>
</dbReference>
<dbReference type="CDD" id="cd00054">
    <property type="entry name" value="EGF_CA"/>
    <property type="match status" value="6"/>
</dbReference>
<dbReference type="FunFam" id="2.10.25.10:FF:000018">
    <property type="entry name" value="Delta-like 1"/>
    <property type="match status" value="1"/>
</dbReference>
<dbReference type="FunFam" id="2.10.25.10:FF:000368">
    <property type="entry name" value="Delta-like 3 (Drosophila), isoform CRA_b"/>
    <property type="match status" value="1"/>
</dbReference>
<dbReference type="FunFam" id="2.10.25.10:FF:000012">
    <property type="entry name" value="Delta-like protein"/>
    <property type="match status" value="3"/>
</dbReference>
<dbReference type="FunFam" id="2.10.25.10:FF:000064">
    <property type="entry name" value="Delta-like protein"/>
    <property type="match status" value="1"/>
</dbReference>
<dbReference type="FunFam" id="2.10.25.140:FF:000001">
    <property type="entry name" value="Delta-like protein"/>
    <property type="match status" value="1"/>
</dbReference>
<dbReference type="FunFam" id="2.60.40.3510:FF:000004">
    <property type="entry name" value="Delta-like protein"/>
    <property type="match status" value="1"/>
</dbReference>
<dbReference type="FunFam" id="2.10.25.10:FF:000004">
    <property type="entry name" value="Neurogenic locus notch 1"/>
    <property type="match status" value="1"/>
</dbReference>
<dbReference type="Gene3D" id="2.10.25.140">
    <property type="match status" value="1"/>
</dbReference>
<dbReference type="Gene3D" id="2.60.40.3510">
    <property type="match status" value="1"/>
</dbReference>
<dbReference type="Gene3D" id="2.10.25.10">
    <property type="entry name" value="Laminin"/>
    <property type="match status" value="7"/>
</dbReference>
<dbReference type="InterPro" id="IPR001774">
    <property type="entry name" value="DSL"/>
</dbReference>
<dbReference type="InterPro" id="IPR001881">
    <property type="entry name" value="EGF-like_Ca-bd_dom"/>
</dbReference>
<dbReference type="InterPro" id="IPR013032">
    <property type="entry name" value="EGF-like_CS"/>
</dbReference>
<dbReference type="InterPro" id="IPR000742">
    <property type="entry name" value="EGF-like_dom"/>
</dbReference>
<dbReference type="InterPro" id="IPR000152">
    <property type="entry name" value="EGF-type_Asp/Asn_hydroxyl_site"/>
</dbReference>
<dbReference type="InterPro" id="IPR018097">
    <property type="entry name" value="EGF_Ca-bd_CS"/>
</dbReference>
<dbReference type="InterPro" id="IPR009030">
    <property type="entry name" value="Growth_fac_rcpt_cys_sf"/>
</dbReference>
<dbReference type="InterPro" id="IPR011651">
    <property type="entry name" value="Notch_ligand_N"/>
</dbReference>
<dbReference type="PANTHER" id="PTHR12916">
    <property type="entry name" value="CYTOCHROME C OXIDASE POLYPEPTIDE VIC-2"/>
    <property type="match status" value="1"/>
</dbReference>
<dbReference type="PANTHER" id="PTHR12916:SF9">
    <property type="entry name" value="NEUROGENIC LOCUS NOTCH HOMOLOG PROTEIN 1-RELATED"/>
    <property type="match status" value="1"/>
</dbReference>
<dbReference type="Pfam" id="PF01414">
    <property type="entry name" value="DSL"/>
    <property type="match status" value="1"/>
</dbReference>
<dbReference type="Pfam" id="PF00008">
    <property type="entry name" value="EGF"/>
    <property type="match status" value="5"/>
</dbReference>
<dbReference type="Pfam" id="PF21700">
    <property type="entry name" value="EGF_DL_JAG"/>
    <property type="match status" value="1"/>
</dbReference>
<dbReference type="Pfam" id="PF12661">
    <property type="entry name" value="hEGF"/>
    <property type="match status" value="1"/>
</dbReference>
<dbReference type="Pfam" id="PF07657">
    <property type="entry name" value="MNNL"/>
    <property type="match status" value="1"/>
</dbReference>
<dbReference type="PRINTS" id="PR00010">
    <property type="entry name" value="EGFBLOOD"/>
</dbReference>
<dbReference type="SMART" id="SM00051">
    <property type="entry name" value="DSL"/>
    <property type="match status" value="1"/>
</dbReference>
<dbReference type="SMART" id="SM00181">
    <property type="entry name" value="EGF"/>
    <property type="match status" value="8"/>
</dbReference>
<dbReference type="SMART" id="SM00179">
    <property type="entry name" value="EGF_CA"/>
    <property type="match status" value="6"/>
</dbReference>
<dbReference type="SUPFAM" id="SSF57196">
    <property type="entry name" value="EGF/Laminin"/>
    <property type="match status" value="2"/>
</dbReference>
<dbReference type="SUPFAM" id="SSF57184">
    <property type="entry name" value="Growth factor receptor domain"/>
    <property type="match status" value="1"/>
</dbReference>
<dbReference type="PROSITE" id="PS00010">
    <property type="entry name" value="ASX_HYDROXYL"/>
    <property type="match status" value="2"/>
</dbReference>
<dbReference type="PROSITE" id="PS51051">
    <property type="entry name" value="DSL"/>
    <property type="match status" value="1"/>
</dbReference>
<dbReference type="PROSITE" id="PS00022">
    <property type="entry name" value="EGF_1"/>
    <property type="match status" value="9"/>
</dbReference>
<dbReference type="PROSITE" id="PS01186">
    <property type="entry name" value="EGF_2"/>
    <property type="match status" value="7"/>
</dbReference>
<dbReference type="PROSITE" id="PS50026">
    <property type="entry name" value="EGF_3"/>
    <property type="match status" value="8"/>
</dbReference>
<dbReference type="PROSITE" id="PS01187">
    <property type="entry name" value="EGF_CA"/>
    <property type="match status" value="2"/>
</dbReference>
<evidence type="ECO:0000250" key="1"/>
<evidence type="ECO:0000255" key="2"/>
<evidence type="ECO:0000255" key="3">
    <source>
        <dbReference type="PROSITE-ProRule" id="PRU00076"/>
    </source>
</evidence>
<evidence type="ECO:0000255" key="4">
    <source>
        <dbReference type="PROSITE-ProRule" id="PRU00377"/>
    </source>
</evidence>
<evidence type="ECO:0000269" key="5">
    <source>
    </source>
</evidence>
<evidence type="ECO:0000269" key="6">
    <source>
    </source>
</evidence>
<proteinExistence type="evidence at protein level"/>
<protein>
    <recommendedName>
        <fullName>Delta-like protein B</fullName>
        <shortName>DeltaB</shortName>
    </recommendedName>
</protein>
<gene>
    <name type="primary">dlb</name>
</gene>
<comment type="function">
    <text evidence="6">Acts as a ligand for Notch receptors and is involved in primary neurogenesis. Can activate Notch receptors, thereby playing a key role in lateral inhibition, a process that prevents the immediate neighbors of each nascent neural cell from simultaneously embarking on neural differentiation.</text>
</comment>
<comment type="subcellular location">
    <subcellularLocation>
        <location evidence="1">Membrane</location>
        <topology evidence="1">Single-pass type I membrane protein</topology>
    </subcellularLocation>
</comment>
<comment type="developmental stage">
    <text evidence="6">Expressed in the epiblast (the future neurectoderm) and in neuroblasts. Expressed in overlapping regions with deltaA (dla) and deltaD (dld), but differs in the neural plate: it is apparently confined to the scattered cells within those patches that differentiate as neurons, while dla and dld are expressed in patches of contiguous cells.</text>
</comment>
<comment type="PTM">
    <text evidence="5">Ubiquitinated by mib, leading to its endocytosis and subsequent degradation.</text>
</comment>
<name>DLLB_DANRE</name>
<feature type="signal peptide" evidence="2">
    <location>
        <begin position="1"/>
        <end position="20"/>
    </location>
</feature>
<feature type="chain" id="PRO_0000007515" description="Delta-like protein B">
    <location>
        <begin position="21"/>
        <end position="615"/>
    </location>
</feature>
<feature type="topological domain" description="Extracellular" evidence="2">
    <location>
        <begin position="21"/>
        <end position="522"/>
    </location>
</feature>
<feature type="transmembrane region" description="Helical" evidence="2">
    <location>
        <begin position="523"/>
        <end position="543"/>
    </location>
</feature>
<feature type="topological domain" description="Cytoplasmic" evidence="2">
    <location>
        <begin position="544"/>
        <end position="615"/>
    </location>
</feature>
<feature type="domain" description="DSL" evidence="4">
    <location>
        <begin position="159"/>
        <end position="203"/>
    </location>
</feature>
<feature type="domain" description="EGF-like 1" evidence="3">
    <location>
        <begin position="204"/>
        <end position="237"/>
    </location>
</feature>
<feature type="domain" description="EGF-like 2" evidence="3">
    <location>
        <begin position="241"/>
        <end position="268"/>
    </location>
</feature>
<feature type="domain" description="EGF-like 3" evidence="3">
    <location>
        <begin position="270"/>
        <end position="308"/>
    </location>
</feature>
<feature type="domain" description="EGF-like 4; calcium-binding" evidence="3">
    <location>
        <begin position="310"/>
        <end position="346"/>
    </location>
</feature>
<feature type="domain" description="EGF-like 5" evidence="3">
    <location>
        <begin position="348"/>
        <end position="385"/>
    </location>
</feature>
<feature type="domain" description="EGF-like 6" evidence="3">
    <location>
        <begin position="387"/>
        <end position="423"/>
    </location>
</feature>
<feature type="domain" description="EGF-like 7; calcium-binding" evidence="3">
    <location>
        <begin position="425"/>
        <end position="461"/>
    </location>
</feature>
<feature type="domain" description="EGF-like 8" evidence="3">
    <location>
        <begin position="463"/>
        <end position="499"/>
    </location>
</feature>
<feature type="glycosylation site" description="N-linked (GlcNAc...) asparagine" evidence="2">
    <location>
        <position position="459"/>
    </location>
</feature>
<feature type="disulfide bond" evidence="1">
    <location>
        <begin position="161"/>
        <end position="170"/>
    </location>
</feature>
<feature type="disulfide bond" evidence="1">
    <location>
        <begin position="174"/>
        <end position="186"/>
    </location>
</feature>
<feature type="disulfide bond" evidence="1">
    <location>
        <begin position="194"/>
        <end position="203"/>
    </location>
</feature>
<feature type="disulfide bond" evidence="1">
    <location>
        <begin position="208"/>
        <end position="219"/>
    </location>
</feature>
<feature type="disulfide bond" evidence="1">
    <location>
        <begin position="212"/>
        <end position="225"/>
    </location>
</feature>
<feature type="disulfide bond" evidence="1">
    <location>
        <begin position="227"/>
        <end position="236"/>
    </location>
</feature>
<feature type="disulfide bond" evidence="1">
    <location>
        <begin position="245"/>
        <end position="250"/>
    </location>
</feature>
<feature type="disulfide bond" evidence="1">
    <location>
        <begin position="258"/>
        <end position="267"/>
    </location>
</feature>
<feature type="disulfide bond" evidence="1">
    <location>
        <begin position="274"/>
        <end position="286"/>
    </location>
</feature>
<feature type="disulfide bond" evidence="1">
    <location>
        <begin position="280"/>
        <end position="296"/>
    </location>
</feature>
<feature type="disulfide bond" evidence="1">
    <location>
        <begin position="298"/>
        <end position="307"/>
    </location>
</feature>
<feature type="disulfide bond" evidence="1">
    <location>
        <begin position="314"/>
        <end position="325"/>
    </location>
</feature>
<feature type="disulfide bond" evidence="1">
    <location>
        <begin position="319"/>
        <end position="334"/>
    </location>
</feature>
<feature type="disulfide bond" evidence="1">
    <location>
        <begin position="336"/>
        <end position="345"/>
    </location>
</feature>
<feature type="disulfide bond" evidence="1">
    <location>
        <begin position="352"/>
        <end position="363"/>
    </location>
</feature>
<feature type="disulfide bond" evidence="1">
    <location>
        <begin position="357"/>
        <end position="373"/>
    </location>
</feature>
<feature type="disulfide bond" evidence="1">
    <location>
        <begin position="375"/>
        <end position="384"/>
    </location>
</feature>
<feature type="disulfide bond" evidence="1">
    <location>
        <begin position="391"/>
        <end position="402"/>
    </location>
</feature>
<feature type="disulfide bond" evidence="1">
    <location>
        <begin position="396"/>
        <end position="411"/>
    </location>
</feature>
<feature type="disulfide bond" evidence="1">
    <location>
        <begin position="413"/>
        <end position="422"/>
    </location>
</feature>
<feature type="disulfide bond" evidence="1">
    <location>
        <begin position="429"/>
        <end position="440"/>
    </location>
</feature>
<feature type="disulfide bond" evidence="1">
    <location>
        <begin position="434"/>
        <end position="449"/>
    </location>
</feature>
<feature type="disulfide bond" evidence="1">
    <location>
        <begin position="451"/>
        <end position="460"/>
    </location>
</feature>
<feature type="disulfide bond" evidence="1">
    <location>
        <begin position="467"/>
        <end position="478"/>
    </location>
</feature>
<feature type="disulfide bond" evidence="1">
    <location>
        <begin position="472"/>
        <end position="487"/>
    </location>
</feature>
<feature type="disulfide bond" evidence="1">
    <location>
        <begin position="489"/>
        <end position="498"/>
    </location>
</feature>
<sequence length="615" mass="67593">MAHLSLYCLLSVSLLQLVASSGVFELKVHSFSTTRRFCRRTRDCNIFFRICLKHSEDVISAEPPCTFGTGQTSVLRADQSSIASSAAIRVPFHFKWPGTFSLIIEAWNAESPKEHHDYTENQNNLISRLATRRRLAVGEDWSQDVHFGDQSELRYSYHVFCDEFYFGEACSDYCRPRDDTLGHYTCDENGNKECLVGWQGDYCSDPICSSDCSERHGYCESPGECKCRLGWQGPSCSECVHYPGCLHGTCSQPWQCVCKEGWGGLFCNQDLNYCTNHKPCANGATCTNTGQGSYTCTCRPGFGGTNCELEINECDCNPCKNGGSCNDLENDYSCTCPQGFYGKNCEIIAMTCADDPCFNGGTCEEKFTGGYVCRCPPTFTGSNCEKRLDRCSHKPCANGGECVDLGASALCRCRPGFSGSRCETNIDDCARYPCQNAGTCQDGINDYTCTCTLGFTGKNCSLRADACLTNPCLHGGTCFTHFSGPVCQCVPGFMGSTCEFPVQASLEKMAPRVGQTSPSAVAVSCVLGVLAVFLGVCVGLVVLRRRRHRLRRQQLCDSVFNDLETVNNLDRQHYPYDRDFSQVKPCNTEGRISLAASHTLPAGQEFLWSAGGGLR</sequence>
<keyword id="KW-0106">Calcium</keyword>
<keyword id="KW-0217">Developmental protein</keyword>
<keyword id="KW-0221">Differentiation</keyword>
<keyword id="KW-1015">Disulfide bond</keyword>
<keyword id="KW-0245">EGF-like domain</keyword>
<keyword id="KW-0325">Glycoprotein</keyword>
<keyword id="KW-0472">Membrane</keyword>
<keyword id="KW-0524">Neurogenesis</keyword>
<keyword id="KW-0914">Notch signaling pathway</keyword>
<keyword id="KW-1185">Reference proteome</keyword>
<keyword id="KW-0677">Repeat</keyword>
<keyword id="KW-0732">Signal</keyword>
<keyword id="KW-0812">Transmembrane</keyword>
<keyword id="KW-1133">Transmembrane helix</keyword>
<keyword id="KW-0832">Ubl conjugation</keyword>
<organism>
    <name type="scientific">Danio rerio</name>
    <name type="common">Zebrafish</name>
    <name type="synonym">Brachydanio rerio</name>
    <dbReference type="NCBI Taxonomy" id="7955"/>
    <lineage>
        <taxon>Eukaryota</taxon>
        <taxon>Metazoa</taxon>
        <taxon>Chordata</taxon>
        <taxon>Craniata</taxon>
        <taxon>Vertebrata</taxon>
        <taxon>Euteleostomi</taxon>
        <taxon>Actinopterygii</taxon>
        <taxon>Neopterygii</taxon>
        <taxon>Teleostei</taxon>
        <taxon>Ostariophysi</taxon>
        <taxon>Cypriniformes</taxon>
        <taxon>Danionidae</taxon>
        <taxon>Danioninae</taxon>
        <taxon>Danio</taxon>
    </lineage>
</organism>
<reference key="1">
    <citation type="journal article" date="1998" name="Development">
        <title>Multiple delta genes and lateral inhibition in zebrafish primary neurogenesis.</title>
        <authorList>
            <person name="Haddon C."/>
            <person name="Smithers L."/>
            <person name="Schneider-Maunoury S."/>
            <person name="Coche T."/>
            <person name="Henrique D."/>
            <person name="Lewis J."/>
        </authorList>
    </citation>
    <scope>NUCLEOTIDE SEQUENCE [MRNA]</scope>
    <scope>FUNCTION</scope>
    <scope>TISSUE SPECIFICITY</scope>
    <scope>DEVELOPMENTAL STAGE</scope>
</reference>
<reference key="2">
    <citation type="submission" date="2004-07" db="EMBL/GenBank/DDBJ databases">
        <authorList>
            <consortium name="NIH - Zebrafish Gene Collection (ZGC) project"/>
        </authorList>
    </citation>
    <scope>NUCLEOTIDE SEQUENCE [LARGE SCALE MRNA]</scope>
    <source>
        <tissue>Embryo</tissue>
    </source>
</reference>
<reference key="3">
    <citation type="journal article" date="2003" name="Dev. Cell">
        <title>Mind bomb is a ubiquitin ligase that is essential for efficient activation of Notch signaling by Delta.</title>
        <authorList>
            <person name="Itoh M."/>
            <person name="Kim C.-H."/>
            <person name="Palardy G."/>
            <person name="Oda T."/>
            <person name="Jiang Y.-J."/>
            <person name="Maust D."/>
            <person name="Yeo S.-Y."/>
            <person name="Lorick K."/>
            <person name="Wright G.J."/>
            <person name="Ariza-McNaughton L."/>
            <person name="Weissman A.M."/>
            <person name="Lewis J."/>
            <person name="Chandrasekharappa S.C."/>
            <person name="Chitnis A.B."/>
        </authorList>
    </citation>
    <scope>UBIQUITINATION</scope>
</reference>
<accession>O57409</accession>